<proteinExistence type="evidence at protein level"/>
<sequence>MRTLTLIAIVTCAALVIFHAAAAEELEAQDVIQPEDIFTGVATLEEDRIFECSFSCDIKKNGKPCKGAGEKKCSGGWRCKMNFCVKF</sequence>
<keyword id="KW-0903">Direct protein sequencing</keyword>
<keyword id="KW-1015">Disulfide bond</keyword>
<keyword id="KW-0872">Ion channel impairing toxin</keyword>
<keyword id="KW-0960">Knottin</keyword>
<keyword id="KW-0964">Secreted</keyword>
<keyword id="KW-0732">Signal</keyword>
<keyword id="KW-0800">Toxin</keyword>
<name>JZ47B_CHIGU</name>
<protein>
    <recommendedName>
        <fullName evidence="5">U3-theraphotoxin-Cg1b</fullName>
        <shortName evidence="5">U3-TRTX-Cg1b</shortName>
    </recommendedName>
    <alternativeName>
        <fullName evidence="5">Jingzhaotoxin-47.2</fullName>
        <shortName evidence="7">JZTX-47.2</shortName>
    </alternativeName>
    <alternativeName>
        <fullName evidence="4">Peptide F6-10.40</fullName>
    </alternativeName>
</protein>
<dbReference type="EMBL" id="EU233839">
    <property type="protein sequence ID" value="ABY71658.1"/>
    <property type="molecule type" value="mRNA"/>
</dbReference>
<dbReference type="SMR" id="B1P1A8"/>
<dbReference type="ArachnoServer" id="AS000787">
    <property type="toxin name" value="U3-theraphotoxin-Cg1b"/>
</dbReference>
<dbReference type="GO" id="GO:0005576">
    <property type="term" value="C:extracellular region"/>
    <property type="evidence" value="ECO:0007669"/>
    <property type="project" value="UniProtKB-SubCell"/>
</dbReference>
<dbReference type="GO" id="GO:0099106">
    <property type="term" value="F:ion channel regulator activity"/>
    <property type="evidence" value="ECO:0007669"/>
    <property type="project" value="UniProtKB-KW"/>
</dbReference>
<dbReference type="GO" id="GO:0090729">
    <property type="term" value="F:toxin activity"/>
    <property type="evidence" value="ECO:0007669"/>
    <property type="project" value="UniProtKB-KW"/>
</dbReference>
<dbReference type="InterPro" id="IPR012625">
    <property type="entry name" value="Hwtx-2-like"/>
</dbReference>
<dbReference type="Pfam" id="PF08089">
    <property type="entry name" value="Toxin_20"/>
    <property type="match status" value="1"/>
</dbReference>
<dbReference type="SUPFAM" id="SSF57059">
    <property type="entry name" value="omega toxin-like"/>
    <property type="match status" value="1"/>
</dbReference>
<dbReference type="PROSITE" id="PS60022">
    <property type="entry name" value="HWTX_2"/>
    <property type="match status" value="1"/>
</dbReference>
<accession>B1P1A8</accession>
<organism>
    <name type="scientific">Chilobrachys guangxiensis</name>
    <name type="common">Chinese earth tiger tarantula</name>
    <name type="synonym">Chilobrachys jingzhao</name>
    <dbReference type="NCBI Taxonomy" id="278060"/>
    <lineage>
        <taxon>Eukaryota</taxon>
        <taxon>Metazoa</taxon>
        <taxon>Ecdysozoa</taxon>
        <taxon>Arthropoda</taxon>
        <taxon>Chelicerata</taxon>
        <taxon>Arachnida</taxon>
        <taxon>Araneae</taxon>
        <taxon>Mygalomorphae</taxon>
        <taxon>Theraphosidae</taxon>
        <taxon>Chilobrachys</taxon>
    </lineage>
</organism>
<feature type="signal peptide" evidence="2">
    <location>
        <begin position="1"/>
        <end position="23"/>
    </location>
</feature>
<feature type="propeptide" id="PRO_0000398504" evidence="3">
    <location>
        <begin position="24"/>
        <end position="48"/>
    </location>
</feature>
<feature type="peptide" id="PRO_0000398505" description="U3-theraphotoxin-Cg1b" evidence="3">
    <location>
        <begin position="49"/>
        <end position="87"/>
    </location>
</feature>
<feature type="disulfide bond" evidence="1">
    <location>
        <begin position="52"/>
        <end position="65"/>
    </location>
</feature>
<feature type="disulfide bond" evidence="1">
    <location>
        <begin position="56"/>
        <end position="79"/>
    </location>
</feature>
<feature type="disulfide bond" evidence="1">
    <location>
        <begin position="73"/>
        <end position="84"/>
    </location>
</feature>
<comment type="function">
    <text evidence="5">Probable ion channel inhibitor.</text>
</comment>
<comment type="subcellular location">
    <subcellularLocation>
        <location evidence="3">Secreted</location>
    </subcellularLocation>
</comment>
<comment type="tissue specificity">
    <text evidence="6">Expressed by the venom gland.</text>
</comment>
<comment type="similarity">
    <text evidence="5">Belongs to the neurotoxin 12 (Hwtx-2) family. 03 (juruin) subfamily.</text>
</comment>
<evidence type="ECO:0000250" key="1">
    <source>
        <dbReference type="UniProtKB" id="P85504"/>
    </source>
</evidence>
<evidence type="ECO:0000255" key="2"/>
<evidence type="ECO:0000269" key="3">
    <source>
    </source>
</evidence>
<evidence type="ECO:0000303" key="4">
    <source>
    </source>
</evidence>
<evidence type="ECO:0000305" key="5"/>
<evidence type="ECO:0000305" key="6">
    <source>
    </source>
</evidence>
<evidence type="ECO:0000312" key="7">
    <source>
        <dbReference type="EMBL" id="ABY71658.1"/>
    </source>
</evidence>
<reference key="1">
    <citation type="journal article" date="2008" name="Cell. Mol. Life Sci.">
        <title>Molecular diversity and evolution of cystine knot toxins of the tarantula Chilobrachys jingzhao.</title>
        <authorList>
            <person name="Chen J."/>
            <person name="Deng M."/>
            <person name="He Q."/>
            <person name="Meng E."/>
            <person name="Jiang L."/>
            <person name="Liao Z."/>
            <person name="Rong M."/>
            <person name="Liang S."/>
        </authorList>
    </citation>
    <scope>NUCLEOTIDE SEQUENCE [LARGE SCALE MRNA]</scope>
    <source>
        <tissue>Venom gland</tissue>
    </source>
</reference>
<reference key="2">
    <citation type="journal article" date="2007" name="Proteomics">
        <title>Proteomic and peptidomic analysis of the venom from Chinese tarantula Chilobrachys jingzhao.</title>
        <authorList>
            <person name="Liao Z."/>
            <person name="Cao J."/>
            <person name="Li S."/>
            <person name="Yan X."/>
            <person name="Hu W."/>
            <person name="He Q."/>
            <person name="Chen J."/>
            <person name="Tang J."/>
            <person name="Xie J."/>
            <person name="Liang S."/>
        </authorList>
    </citation>
    <scope>PROTEIN SEQUENCE OF 49-87</scope>
    <scope>IDENTIFICATION BY MASS SPECTROMETRY</scope>
    <scope>SUBCELLULAR LOCATION</scope>
    <source>
        <tissue>Venom</tissue>
    </source>
</reference>